<reference evidence="4" key="1">
    <citation type="journal article" date="2002" name="J. Biol. Chem.">
        <title>Proteome map of the chloroplast lumen of Arabidopsis thaliana.</title>
        <authorList>
            <person name="Schubert M."/>
            <person name="Petersson U.A."/>
            <person name="Haas B.J."/>
            <person name="Funk C."/>
            <person name="Schroeder W.P."/>
            <person name="Kieselbach T."/>
        </authorList>
    </citation>
    <scope>PROTEIN SEQUENCE</scope>
    <scope>SUBCELLULAR LOCATION</scope>
    <source>
        <tissue evidence="2">Leaf</tissue>
    </source>
</reference>
<protein>
    <recommendedName>
        <fullName>Thylakoid lumenal 20 kDa protein</fullName>
    </recommendedName>
</protein>
<name>TL20_SPIOL</name>
<dbReference type="Proteomes" id="UP001155700">
    <property type="component" value="Unplaced"/>
</dbReference>
<dbReference type="GO" id="GO:0009543">
    <property type="term" value="C:chloroplast thylakoid lumen"/>
    <property type="evidence" value="ECO:0007669"/>
    <property type="project" value="UniProtKB-SubCell"/>
</dbReference>
<evidence type="ECO:0000256" key="1">
    <source>
        <dbReference type="SAM" id="MobiDB-lite"/>
    </source>
</evidence>
<evidence type="ECO:0000269" key="2">
    <source>
    </source>
</evidence>
<evidence type="ECO:0000303" key="3">
    <source>
    </source>
</evidence>
<evidence type="ECO:0000305" key="4"/>
<keyword id="KW-0150">Chloroplast</keyword>
<keyword id="KW-0903">Direct protein sequencing</keyword>
<keyword id="KW-0934">Plastid</keyword>
<keyword id="KW-1185">Reference proteome</keyword>
<keyword id="KW-0793">Thylakoid</keyword>
<organism>
    <name type="scientific">Spinacia oleracea</name>
    <name type="common">Spinach</name>
    <dbReference type="NCBI Taxonomy" id="3562"/>
    <lineage>
        <taxon>Eukaryota</taxon>
        <taxon>Viridiplantae</taxon>
        <taxon>Streptophyta</taxon>
        <taxon>Embryophyta</taxon>
        <taxon>Tracheophyta</taxon>
        <taxon>Spermatophyta</taxon>
        <taxon>Magnoliopsida</taxon>
        <taxon>eudicotyledons</taxon>
        <taxon>Gunneridae</taxon>
        <taxon>Pentapetalae</taxon>
        <taxon>Caryophyllales</taxon>
        <taxon>Chenopodiaceae</taxon>
        <taxon>Chenopodioideae</taxon>
        <taxon>Anserineae</taxon>
        <taxon>Spinacia</taxon>
    </lineage>
</organism>
<sequence>RDVDVGSFLPKSPSDPSMVL</sequence>
<feature type="chain" id="PRO_0000311679" description="Thylakoid lumenal 20 kDa protein">
    <location>
        <begin position="1"/>
        <end position="20" status="greater than"/>
    </location>
</feature>
<feature type="region of interest" description="Disordered" evidence="1">
    <location>
        <begin position="1"/>
        <end position="20"/>
    </location>
</feature>
<feature type="non-terminal residue" evidence="3">
    <location>
        <position position="20"/>
    </location>
</feature>
<comment type="subcellular location">
    <subcellularLocation>
        <location evidence="2">Plastid</location>
        <location evidence="2">Chloroplast thylakoid lumen</location>
    </subcellularLocation>
</comment>
<proteinExistence type="evidence at protein level"/>
<accession>P83090</accession>